<accession>Q89G50</accession>
<reference key="1">
    <citation type="journal article" date="2002" name="DNA Res.">
        <title>Complete genomic sequence of nitrogen-fixing symbiotic bacterium Bradyrhizobium japonicum USDA110.</title>
        <authorList>
            <person name="Kaneko T."/>
            <person name="Nakamura Y."/>
            <person name="Sato S."/>
            <person name="Minamisawa K."/>
            <person name="Uchiumi T."/>
            <person name="Sasamoto S."/>
            <person name="Watanabe A."/>
            <person name="Idesawa K."/>
            <person name="Iriguchi M."/>
            <person name="Kawashima K."/>
            <person name="Kohara M."/>
            <person name="Matsumoto M."/>
            <person name="Shimpo S."/>
            <person name="Tsuruoka H."/>
            <person name="Wada T."/>
            <person name="Yamada M."/>
            <person name="Tabata S."/>
        </authorList>
    </citation>
    <scope>NUCLEOTIDE SEQUENCE [LARGE SCALE GENOMIC DNA]</scope>
    <source>
        <strain>JCM 10833 / BCRC 13528 / IAM 13628 / NBRC 14792 / USDA 110</strain>
    </source>
</reference>
<comment type="function">
    <text evidence="1">Involved in the biosynthesis of branched-chain amino acids (BCAA). Catalyzes an alkyl-migration followed by a ketol-acid reduction of (S)-2-acetolactate (S2AL) to yield (R)-2,3-dihydroxy-isovalerate. In the isomerase reaction, S2AL is rearranged via a Mg-dependent methyl migration to produce 3-hydroxy-3-methyl-2-ketobutyrate (HMKB). In the reductase reaction, this 2-ketoacid undergoes a metal-dependent reduction by NADPH to yield (R)-2,3-dihydroxy-isovalerate.</text>
</comment>
<comment type="catalytic activity">
    <reaction evidence="1">
        <text>(2R)-2,3-dihydroxy-3-methylbutanoate + NADP(+) = (2S)-2-acetolactate + NADPH + H(+)</text>
        <dbReference type="Rhea" id="RHEA:22068"/>
        <dbReference type="ChEBI" id="CHEBI:15378"/>
        <dbReference type="ChEBI" id="CHEBI:49072"/>
        <dbReference type="ChEBI" id="CHEBI:57783"/>
        <dbReference type="ChEBI" id="CHEBI:58349"/>
        <dbReference type="ChEBI" id="CHEBI:58476"/>
        <dbReference type="EC" id="1.1.1.86"/>
    </reaction>
</comment>
<comment type="catalytic activity">
    <reaction evidence="1">
        <text>(2R,3R)-2,3-dihydroxy-3-methylpentanoate + NADP(+) = (S)-2-ethyl-2-hydroxy-3-oxobutanoate + NADPH + H(+)</text>
        <dbReference type="Rhea" id="RHEA:13493"/>
        <dbReference type="ChEBI" id="CHEBI:15378"/>
        <dbReference type="ChEBI" id="CHEBI:49256"/>
        <dbReference type="ChEBI" id="CHEBI:49258"/>
        <dbReference type="ChEBI" id="CHEBI:57783"/>
        <dbReference type="ChEBI" id="CHEBI:58349"/>
        <dbReference type="EC" id="1.1.1.86"/>
    </reaction>
</comment>
<comment type="cofactor">
    <cofactor evidence="1">
        <name>Mg(2+)</name>
        <dbReference type="ChEBI" id="CHEBI:18420"/>
    </cofactor>
    <text evidence="1">Binds 2 magnesium ions per subunit.</text>
</comment>
<comment type="pathway">
    <text evidence="1">Amino-acid biosynthesis; L-isoleucine biosynthesis; L-isoleucine from 2-oxobutanoate: step 2/4.</text>
</comment>
<comment type="pathway">
    <text evidence="1">Amino-acid biosynthesis; L-valine biosynthesis; L-valine from pyruvate: step 2/4.</text>
</comment>
<comment type="similarity">
    <text evidence="1">Belongs to the ketol-acid reductoisomerase family.</text>
</comment>
<name>ILVC_BRADU</name>
<evidence type="ECO:0000255" key="1">
    <source>
        <dbReference type="HAMAP-Rule" id="MF_00435"/>
    </source>
</evidence>
<evidence type="ECO:0000255" key="2">
    <source>
        <dbReference type="PROSITE-ProRule" id="PRU01197"/>
    </source>
</evidence>
<evidence type="ECO:0000255" key="3">
    <source>
        <dbReference type="PROSITE-ProRule" id="PRU01198"/>
    </source>
</evidence>
<dbReference type="EC" id="1.1.1.86" evidence="1"/>
<dbReference type="EMBL" id="BA000040">
    <property type="protein sequence ID" value="BAC51762.1"/>
    <property type="molecule type" value="Genomic_DNA"/>
</dbReference>
<dbReference type="RefSeq" id="NP_773137.1">
    <property type="nucleotide sequence ID" value="NC_004463.1"/>
</dbReference>
<dbReference type="RefSeq" id="WP_011089237.1">
    <property type="nucleotide sequence ID" value="NC_004463.1"/>
</dbReference>
<dbReference type="SMR" id="Q89G50"/>
<dbReference type="FunCoup" id="Q89G50">
    <property type="interactions" value="655"/>
</dbReference>
<dbReference type="STRING" id="224911.AAV28_30045"/>
<dbReference type="EnsemblBacteria" id="BAC51762">
    <property type="protein sequence ID" value="BAC51762"/>
    <property type="gene ID" value="BAC51762"/>
</dbReference>
<dbReference type="GeneID" id="46493470"/>
<dbReference type="KEGG" id="bja:bll6497"/>
<dbReference type="PATRIC" id="fig|224911.44.peg.6495"/>
<dbReference type="eggNOG" id="COG0059">
    <property type="taxonomic scope" value="Bacteria"/>
</dbReference>
<dbReference type="HOGENOM" id="CLU_033821_0_1_5"/>
<dbReference type="InParanoid" id="Q89G50"/>
<dbReference type="OrthoDB" id="9804088at2"/>
<dbReference type="PhylomeDB" id="Q89G50"/>
<dbReference type="UniPathway" id="UPA00047">
    <property type="reaction ID" value="UER00056"/>
</dbReference>
<dbReference type="UniPathway" id="UPA00049">
    <property type="reaction ID" value="UER00060"/>
</dbReference>
<dbReference type="Proteomes" id="UP000002526">
    <property type="component" value="Chromosome"/>
</dbReference>
<dbReference type="GO" id="GO:0005829">
    <property type="term" value="C:cytosol"/>
    <property type="evidence" value="ECO:0000318"/>
    <property type="project" value="GO_Central"/>
</dbReference>
<dbReference type="GO" id="GO:0004455">
    <property type="term" value="F:ketol-acid reductoisomerase activity"/>
    <property type="evidence" value="ECO:0000318"/>
    <property type="project" value="GO_Central"/>
</dbReference>
<dbReference type="GO" id="GO:0000287">
    <property type="term" value="F:magnesium ion binding"/>
    <property type="evidence" value="ECO:0007669"/>
    <property type="project" value="UniProtKB-UniRule"/>
</dbReference>
<dbReference type="GO" id="GO:0050661">
    <property type="term" value="F:NADP binding"/>
    <property type="evidence" value="ECO:0007669"/>
    <property type="project" value="InterPro"/>
</dbReference>
<dbReference type="GO" id="GO:0009097">
    <property type="term" value="P:isoleucine biosynthetic process"/>
    <property type="evidence" value="ECO:0000318"/>
    <property type="project" value="GO_Central"/>
</dbReference>
<dbReference type="GO" id="GO:0009099">
    <property type="term" value="P:L-valine biosynthetic process"/>
    <property type="evidence" value="ECO:0000318"/>
    <property type="project" value="GO_Central"/>
</dbReference>
<dbReference type="FunFam" id="3.40.50.720:FF:000023">
    <property type="entry name" value="Ketol-acid reductoisomerase (NADP(+))"/>
    <property type="match status" value="1"/>
</dbReference>
<dbReference type="Gene3D" id="6.10.240.10">
    <property type="match status" value="1"/>
</dbReference>
<dbReference type="Gene3D" id="3.40.50.720">
    <property type="entry name" value="NAD(P)-binding Rossmann-like Domain"/>
    <property type="match status" value="1"/>
</dbReference>
<dbReference type="HAMAP" id="MF_00435">
    <property type="entry name" value="IlvC"/>
    <property type="match status" value="1"/>
</dbReference>
<dbReference type="InterPro" id="IPR008927">
    <property type="entry name" value="6-PGluconate_DH-like_C_sf"/>
</dbReference>
<dbReference type="InterPro" id="IPR013023">
    <property type="entry name" value="KARI"/>
</dbReference>
<dbReference type="InterPro" id="IPR000506">
    <property type="entry name" value="KARI_C"/>
</dbReference>
<dbReference type="InterPro" id="IPR013116">
    <property type="entry name" value="KARI_N"/>
</dbReference>
<dbReference type="InterPro" id="IPR014359">
    <property type="entry name" value="KARI_prok"/>
</dbReference>
<dbReference type="InterPro" id="IPR036291">
    <property type="entry name" value="NAD(P)-bd_dom_sf"/>
</dbReference>
<dbReference type="NCBIfam" id="TIGR00465">
    <property type="entry name" value="ilvC"/>
    <property type="match status" value="1"/>
</dbReference>
<dbReference type="NCBIfam" id="NF004017">
    <property type="entry name" value="PRK05479.1"/>
    <property type="match status" value="1"/>
</dbReference>
<dbReference type="NCBIfam" id="NF009940">
    <property type="entry name" value="PRK13403.1"/>
    <property type="match status" value="1"/>
</dbReference>
<dbReference type="PANTHER" id="PTHR21371">
    <property type="entry name" value="KETOL-ACID REDUCTOISOMERASE, MITOCHONDRIAL"/>
    <property type="match status" value="1"/>
</dbReference>
<dbReference type="PANTHER" id="PTHR21371:SF1">
    <property type="entry name" value="KETOL-ACID REDUCTOISOMERASE, MITOCHONDRIAL"/>
    <property type="match status" value="1"/>
</dbReference>
<dbReference type="Pfam" id="PF01450">
    <property type="entry name" value="KARI_C"/>
    <property type="match status" value="1"/>
</dbReference>
<dbReference type="Pfam" id="PF07991">
    <property type="entry name" value="KARI_N"/>
    <property type="match status" value="1"/>
</dbReference>
<dbReference type="PIRSF" id="PIRSF000116">
    <property type="entry name" value="IlvC_gammaproteo"/>
    <property type="match status" value="1"/>
</dbReference>
<dbReference type="SUPFAM" id="SSF48179">
    <property type="entry name" value="6-phosphogluconate dehydrogenase C-terminal domain-like"/>
    <property type="match status" value="1"/>
</dbReference>
<dbReference type="SUPFAM" id="SSF51735">
    <property type="entry name" value="NAD(P)-binding Rossmann-fold domains"/>
    <property type="match status" value="1"/>
</dbReference>
<dbReference type="PROSITE" id="PS51851">
    <property type="entry name" value="KARI_C"/>
    <property type="match status" value="1"/>
</dbReference>
<dbReference type="PROSITE" id="PS51850">
    <property type="entry name" value="KARI_N"/>
    <property type="match status" value="1"/>
</dbReference>
<protein>
    <recommendedName>
        <fullName evidence="1">Ketol-acid reductoisomerase (NADP(+))</fullName>
        <shortName evidence="1">KARI</shortName>
        <ecNumber evidence="1">1.1.1.86</ecNumber>
    </recommendedName>
    <alternativeName>
        <fullName evidence="1">Acetohydroxy-acid isomeroreductase</fullName>
        <shortName evidence="1">AHIR</shortName>
    </alternativeName>
    <alternativeName>
        <fullName evidence="1">Alpha-keto-beta-hydroxylacyl reductoisomerase</fullName>
    </alternativeName>
    <alternativeName>
        <fullName evidence="1">Ketol-acid reductoisomerase type 1</fullName>
    </alternativeName>
    <alternativeName>
        <fullName evidence="1">Ketol-acid reductoisomerase type I</fullName>
    </alternativeName>
</protein>
<feature type="chain" id="PRO_0000151283" description="Ketol-acid reductoisomerase (NADP(+))">
    <location>
        <begin position="1"/>
        <end position="339"/>
    </location>
</feature>
<feature type="domain" description="KARI N-terminal Rossmann" evidence="2">
    <location>
        <begin position="1"/>
        <end position="182"/>
    </location>
</feature>
<feature type="domain" description="KARI C-terminal knotted" evidence="3">
    <location>
        <begin position="183"/>
        <end position="328"/>
    </location>
</feature>
<feature type="active site" evidence="1">
    <location>
        <position position="108"/>
    </location>
</feature>
<feature type="binding site" evidence="1">
    <location>
        <begin position="24"/>
        <end position="27"/>
    </location>
    <ligand>
        <name>NADP(+)</name>
        <dbReference type="ChEBI" id="CHEBI:58349"/>
    </ligand>
</feature>
<feature type="binding site" evidence="1">
    <location>
        <position position="48"/>
    </location>
    <ligand>
        <name>NADP(+)</name>
        <dbReference type="ChEBI" id="CHEBI:58349"/>
    </ligand>
</feature>
<feature type="binding site" evidence="1">
    <location>
        <position position="51"/>
    </location>
    <ligand>
        <name>NADP(+)</name>
        <dbReference type="ChEBI" id="CHEBI:58349"/>
    </ligand>
</feature>
<feature type="binding site" evidence="1">
    <location>
        <position position="53"/>
    </location>
    <ligand>
        <name>NADP(+)</name>
        <dbReference type="ChEBI" id="CHEBI:58349"/>
    </ligand>
</feature>
<feature type="binding site" evidence="1">
    <location>
        <begin position="83"/>
        <end position="86"/>
    </location>
    <ligand>
        <name>NADP(+)</name>
        <dbReference type="ChEBI" id="CHEBI:58349"/>
    </ligand>
</feature>
<feature type="binding site" evidence="1">
    <location>
        <position position="134"/>
    </location>
    <ligand>
        <name>NADP(+)</name>
        <dbReference type="ChEBI" id="CHEBI:58349"/>
    </ligand>
</feature>
<feature type="binding site" evidence="1">
    <location>
        <position position="191"/>
    </location>
    <ligand>
        <name>Mg(2+)</name>
        <dbReference type="ChEBI" id="CHEBI:18420"/>
        <label>1</label>
    </ligand>
</feature>
<feature type="binding site" evidence="1">
    <location>
        <position position="191"/>
    </location>
    <ligand>
        <name>Mg(2+)</name>
        <dbReference type="ChEBI" id="CHEBI:18420"/>
        <label>2</label>
    </ligand>
</feature>
<feature type="binding site" evidence="1">
    <location>
        <position position="195"/>
    </location>
    <ligand>
        <name>Mg(2+)</name>
        <dbReference type="ChEBI" id="CHEBI:18420"/>
        <label>1</label>
    </ligand>
</feature>
<feature type="binding site" evidence="1">
    <location>
        <position position="227"/>
    </location>
    <ligand>
        <name>Mg(2+)</name>
        <dbReference type="ChEBI" id="CHEBI:18420"/>
        <label>2</label>
    </ligand>
</feature>
<feature type="binding site" evidence="1">
    <location>
        <position position="231"/>
    </location>
    <ligand>
        <name>Mg(2+)</name>
        <dbReference type="ChEBI" id="CHEBI:18420"/>
        <label>2</label>
    </ligand>
</feature>
<feature type="binding site" evidence="1">
    <location>
        <position position="252"/>
    </location>
    <ligand>
        <name>substrate</name>
    </ligand>
</feature>
<gene>
    <name evidence="1" type="primary">ilvC</name>
    <name type="ordered locus">bll6497</name>
</gene>
<organism>
    <name type="scientific">Bradyrhizobium diazoefficiens (strain JCM 10833 / BCRC 13528 / IAM 13628 / NBRC 14792 / USDA 110)</name>
    <dbReference type="NCBI Taxonomy" id="224911"/>
    <lineage>
        <taxon>Bacteria</taxon>
        <taxon>Pseudomonadati</taxon>
        <taxon>Pseudomonadota</taxon>
        <taxon>Alphaproteobacteria</taxon>
        <taxon>Hyphomicrobiales</taxon>
        <taxon>Nitrobacteraceae</taxon>
        <taxon>Bradyrhizobium</taxon>
    </lineage>
</organism>
<sequence length="339" mass="36887">MRVYYDRDADLNLIKGKKVAIVGYGSQGHAHALNLKDSGVKEVAIALRKDSSSVKKAEAAGFKVMDVAEAAKWADLVMMLTPDELQGDIYREHLHDNMKKGAALVFAHGLNVHFNLLDPRADLDVLMIAPKGPGHTVRSEYQRGGGVPCLIAIAKDVSGNAHDLGLSYASAVGGGRAGIIETTFKEECETDLFGEQVVLCGGLVELIKGGYETLVEAGYAPEMAYFECLHEVKLIVDLIYEGGIANMNYSISNTAEYGEYVTGPRIVTAETKAEMKRVLADIQGGKFARDWMLENKVNQTSFKATRAKLAAHPIEEVGAKLRDMMPWIKKGALVDKSKN</sequence>
<keyword id="KW-0028">Amino-acid biosynthesis</keyword>
<keyword id="KW-0100">Branched-chain amino acid biosynthesis</keyword>
<keyword id="KW-0460">Magnesium</keyword>
<keyword id="KW-0479">Metal-binding</keyword>
<keyword id="KW-0521">NADP</keyword>
<keyword id="KW-0560">Oxidoreductase</keyword>
<keyword id="KW-1185">Reference proteome</keyword>
<proteinExistence type="inferred from homology"/>